<name>CATV_NPVAH</name>
<evidence type="ECO:0000250" key="1"/>
<evidence type="ECO:0000255" key="2"/>
<evidence type="ECO:0000255" key="3">
    <source>
        <dbReference type="PROSITE-ProRule" id="PRU10088"/>
    </source>
</evidence>
<evidence type="ECO:0000255" key="4">
    <source>
        <dbReference type="PROSITE-ProRule" id="PRU10089"/>
    </source>
</evidence>
<evidence type="ECO:0000255" key="5">
    <source>
        <dbReference type="PROSITE-ProRule" id="PRU10090"/>
    </source>
</evidence>
<organismHost>
    <name type="scientific">Adoxophyes honmai</name>
    <name type="common">Smaller tea tortrix moth</name>
    <dbReference type="NCBI Taxonomy" id="85585"/>
</organismHost>
<accession>Q80LP4</accession>
<reference key="1">
    <citation type="journal article" date="2003" name="Virology">
        <title>Genome sequence and organization of a nucleopolyhedrovirus isolated from the smaller tea tortrix, Adoxophyes honmai.</title>
        <authorList>
            <person name="Nakai M."/>
            <person name="Goto C."/>
            <person name="Kang W."/>
            <person name="Shikata M."/>
            <person name="Luque T."/>
            <person name="Kunimi Y."/>
        </authorList>
    </citation>
    <scope>NUCLEOTIDE SEQUENCE [GENOMIC DNA]</scope>
    <source>
        <strain>ADN001</strain>
    </source>
</reference>
<keyword id="KW-1015">Disulfide bond</keyword>
<keyword id="KW-0325">Glycoprotein</keyword>
<keyword id="KW-0378">Hydrolase</keyword>
<keyword id="KW-0645">Protease</keyword>
<keyword id="KW-1185">Reference proteome</keyword>
<keyword id="KW-0732">Signal</keyword>
<keyword id="KW-0788">Thiol protease</keyword>
<keyword id="KW-0865">Zymogen</keyword>
<comment type="function">
    <text evidence="1">Cysteine protease that plays an essential role in host liquefaction to facilitate horizontal transmission of the virus. May participate in the degradation of foreign protein expressed by the baculovirus system (By similarity).</text>
</comment>
<comment type="catalytic activity">
    <reaction>
        <text>Endopeptidase of broad specificity, hydrolyzing substrates of both cathepsin L and cathepsin B.</text>
        <dbReference type="EC" id="3.4.22.50"/>
    </reaction>
</comment>
<comment type="PTM">
    <text evidence="1">Synthesized as an inactive proenzyme and activated by proteolytic removal of the inhibitory propeptide.</text>
</comment>
<comment type="similarity">
    <text evidence="3 4 5">Belongs to the peptidase C1 family.</text>
</comment>
<dbReference type="EC" id="3.4.22.50"/>
<dbReference type="EMBL" id="AP006270">
    <property type="protein sequence ID" value="BAC67303.1"/>
    <property type="molecule type" value="Genomic_DNA"/>
</dbReference>
<dbReference type="RefSeq" id="NP_818699.1">
    <property type="nucleotide sequence ID" value="NC_004690.1"/>
</dbReference>
<dbReference type="SMR" id="Q80LP4"/>
<dbReference type="MEROPS" id="C01.083"/>
<dbReference type="GlyCosmos" id="Q80LP4">
    <property type="glycosylation" value="1 site, No reported glycans"/>
</dbReference>
<dbReference type="KEGG" id="vg:1485819"/>
<dbReference type="OrthoDB" id="4752at10239"/>
<dbReference type="Proteomes" id="UP000232720">
    <property type="component" value="Genome"/>
</dbReference>
<dbReference type="GO" id="GO:0008234">
    <property type="term" value="F:cysteine-type peptidase activity"/>
    <property type="evidence" value="ECO:0007669"/>
    <property type="project" value="UniProtKB-KW"/>
</dbReference>
<dbReference type="GO" id="GO:0006508">
    <property type="term" value="P:proteolysis"/>
    <property type="evidence" value="ECO:0007669"/>
    <property type="project" value="UniProtKB-KW"/>
</dbReference>
<dbReference type="CDD" id="cd02248">
    <property type="entry name" value="Peptidase_C1A"/>
    <property type="match status" value="1"/>
</dbReference>
<dbReference type="FunFam" id="3.90.70.10:FF:000103">
    <property type="entry name" value="Hypothetical LOC496748"/>
    <property type="match status" value="1"/>
</dbReference>
<dbReference type="Gene3D" id="3.90.70.10">
    <property type="entry name" value="Cysteine proteinases"/>
    <property type="match status" value="1"/>
</dbReference>
<dbReference type="InterPro" id="IPR038765">
    <property type="entry name" value="Papain-like_cys_pep_sf"/>
</dbReference>
<dbReference type="InterPro" id="IPR025661">
    <property type="entry name" value="Pept_asp_AS"/>
</dbReference>
<dbReference type="InterPro" id="IPR000169">
    <property type="entry name" value="Pept_cys_AS"/>
</dbReference>
<dbReference type="InterPro" id="IPR025660">
    <property type="entry name" value="Pept_his_AS"/>
</dbReference>
<dbReference type="InterPro" id="IPR013128">
    <property type="entry name" value="Peptidase_C1A"/>
</dbReference>
<dbReference type="InterPro" id="IPR000668">
    <property type="entry name" value="Peptidase_C1A_C"/>
</dbReference>
<dbReference type="InterPro" id="IPR039417">
    <property type="entry name" value="Peptidase_C1A_papain-like"/>
</dbReference>
<dbReference type="InterPro" id="IPR013201">
    <property type="entry name" value="Prot_inhib_I29"/>
</dbReference>
<dbReference type="PANTHER" id="PTHR12411">
    <property type="entry name" value="CYSTEINE PROTEASE FAMILY C1-RELATED"/>
    <property type="match status" value="1"/>
</dbReference>
<dbReference type="Pfam" id="PF08246">
    <property type="entry name" value="Inhibitor_I29"/>
    <property type="match status" value="1"/>
</dbReference>
<dbReference type="Pfam" id="PF00112">
    <property type="entry name" value="Peptidase_C1"/>
    <property type="match status" value="1"/>
</dbReference>
<dbReference type="PRINTS" id="PR00705">
    <property type="entry name" value="PAPAIN"/>
</dbReference>
<dbReference type="SMART" id="SM00848">
    <property type="entry name" value="Inhibitor_I29"/>
    <property type="match status" value="1"/>
</dbReference>
<dbReference type="SMART" id="SM00645">
    <property type="entry name" value="Pept_C1"/>
    <property type="match status" value="1"/>
</dbReference>
<dbReference type="SUPFAM" id="SSF54001">
    <property type="entry name" value="Cysteine proteinases"/>
    <property type="match status" value="1"/>
</dbReference>
<dbReference type="PROSITE" id="PS00640">
    <property type="entry name" value="THIOL_PROTEASE_ASN"/>
    <property type="match status" value="1"/>
</dbReference>
<dbReference type="PROSITE" id="PS00139">
    <property type="entry name" value="THIOL_PROTEASE_CYS"/>
    <property type="match status" value="1"/>
</dbReference>
<dbReference type="PROSITE" id="PS00639">
    <property type="entry name" value="THIOL_PROTEASE_HIS"/>
    <property type="match status" value="1"/>
</dbReference>
<feature type="signal peptide" evidence="2">
    <location>
        <begin position="1"/>
        <end position="19"/>
    </location>
</feature>
<feature type="propeptide" id="PRO_0000322202" description="Activation peptide" evidence="2">
    <location>
        <begin position="20"/>
        <end position="126"/>
    </location>
</feature>
<feature type="chain" id="PRO_0000050573" description="Viral cathepsin">
    <location>
        <begin position="127"/>
        <end position="337"/>
    </location>
</feature>
<feature type="active site" evidence="1">
    <location>
        <position position="150"/>
    </location>
</feature>
<feature type="active site" evidence="1">
    <location>
        <position position="283"/>
    </location>
</feature>
<feature type="active site" evidence="1">
    <location>
        <position position="303"/>
    </location>
</feature>
<feature type="glycosylation site" description="N-linked (GlcNAc...) asparagine; by host" evidence="2">
    <location>
        <position position="172"/>
    </location>
</feature>
<feature type="disulfide bond" evidence="1">
    <location>
        <begin position="147"/>
        <end position="188"/>
    </location>
</feature>
<feature type="disulfide bond" evidence="1">
    <location>
        <begin position="181"/>
        <end position="221"/>
    </location>
</feature>
<feature type="disulfide bond" evidence="1">
    <location>
        <begin position="276"/>
        <end position="324"/>
    </location>
</feature>
<organism>
    <name type="scientific">Adoxophyes honmai nucleopolyhedrovirus</name>
    <dbReference type="NCBI Taxonomy" id="224399"/>
    <lineage>
        <taxon>Viruses</taxon>
        <taxon>Viruses incertae sedis</taxon>
        <taxon>Naldaviricetes</taxon>
        <taxon>Lefavirales</taxon>
        <taxon>Baculoviridae</taxon>
        <taxon>Alphabaculovirus</taxon>
        <taxon>Alphabaculovirus adhonmai</taxon>
    </lineage>
</organism>
<gene>
    <name type="primary">VCATH</name>
    <name type="synonym">52</name>
</gene>
<proteinExistence type="inferred from homology"/>
<sequence length="337" mass="37937">MTLLMIFTILLVASSQIEGHLKFDIHDAQHYFETFIINYNKQYPDTKTKNYRFKIFKQNLEDINEKNKLNDSAIYNINKFSDLSKNELLTKYTGLTSKKPSNMVRSTSNFCNVIHLDAPPDVHDELPQNFDWRVNNKMTSVKDQGACGSCWAHAAVGTLETLYAIKHNYLINLSEQQLIDCDSANMACDGGLMHTAFEQLMNAGGLMEEIDYPYQGTKGVCKIDNKKFALSVSSCKRYIFQNEENLKKELITMGPIAMAIDAASISTYSKGIIHFCENLGLNHAVLLVGYGTEGGVSYWTLKNSWGSDWGEDGYFRVKRNINACGLNNQLAASATIH</sequence>
<protein>
    <recommendedName>
        <fullName>Viral cathepsin</fullName>
        <shortName>V-cath</shortName>
        <ecNumber>3.4.22.50</ecNumber>
    </recommendedName>
    <alternativeName>
        <fullName>Cysteine proteinase</fullName>
        <shortName>CP</shortName>
    </alternativeName>
</protein>